<reference key="1">
    <citation type="journal article" date="2006" name="J. Bacteriol.">
        <title>Comparative genomic analysis of three strains of Ehrlichia ruminantium reveals an active process of genome size plasticity.</title>
        <authorList>
            <person name="Frutos R."/>
            <person name="Viari A."/>
            <person name="Ferraz C."/>
            <person name="Morgat A."/>
            <person name="Eychenie S."/>
            <person name="Kandassamy Y."/>
            <person name="Chantal I."/>
            <person name="Bensaid A."/>
            <person name="Coissac E."/>
            <person name="Vachiery N."/>
            <person name="Demaille J."/>
            <person name="Martinez D."/>
        </authorList>
    </citation>
    <scope>NUCLEOTIDE SEQUENCE [LARGE SCALE GENOMIC DNA]</scope>
    <source>
        <strain>Gardel</strain>
    </source>
</reference>
<sequence>MLDNIHNLHKEATDKILSTSSLEELENIRSAYFGKSGFITVYLRNISTIKNLEERKSVGNVVNTIYSELKSLINSHRTKLHQIQIDNQLLQDKVDISLPIRPQKIGKLHPISNVLNEVKRIFLSLGFKLYDGPELEDEFHVFDALNTNKNHPAREENDTFYLKTLVNNKRVVLRTHTSSVQIRTMENNDGIYPIKVIAPGKVYRNDWDATHSPMFHQIEGLYIDKNINMGHLKYCINYFLNKFFGKNVQIRFRNSYFPFTEPSAEVDIKCNQNDWIEILGCGMVHSNVLTNVNIDPNQYSGFAFGIGIERITMLKYNISDLRKFYTNNLQWLDHYGFHFTHLTI</sequence>
<name>SYFA_EHRRG</name>
<proteinExistence type="inferred from homology"/>
<accession>Q5FH45</accession>
<dbReference type="EC" id="6.1.1.20" evidence="1"/>
<dbReference type="EMBL" id="CR925677">
    <property type="protein sequence ID" value="CAI27580.1"/>
    <property type="molecule type" value="Genomic_DNA"/>
</dbReference>
<dbReference type="RefSeq" id="WP_011154820.1">
    <property type="nucleotide sequence ID" value="NC_006831.1"/>
</dbReference>
<dbReference type="SMR" id="Q5FH45"/>
<dbReference type="GeneID" id="33057713"/>
<dbReference type="KEGG" id="erg:ERGA_CDS_01280"/>
<dbReference type="HOGENOM" id="CLU_025086_0_1_5"/>
<dbReference type="OrthoDB" id="9800719at2"/>
<dbReference type="Proteomes" id="UP000000533">
    <property type="component" value="Chromosome"/>
</dbReference>
<dbReference type="GO" id="GO:0005737">
    <property type="term" value="C:cytoplasm"/>
    <property type="evidence" value="ECO:0007669"/>
    <property type="project" value="UniProtKB-SubCell"/>
</dbReference>
<dbReference type="GO" id="GO:0005524">
    <property type="term" value="F:ATP binding"/>
    <property type="evidence" value="ECO:0007669"/>
    <property type="project" value="UniProtKB-UniRule"/>
</dbReference>
<dbReference type="GO" id="GO:0000287">
    <property type="term" value="F:magnesium ion binding"/>
    <property type="evidence" value="ECO:0007669"/>
    <property type="project" value="UniProtKB-UniRule"/>
</dbReference>
<dbReference type="GO" id="GO:0004826">
    <property type="term" value="F:phenylalanine-tRNA ligase activity"/>
    <property type="evidence" value="ECO:0007669"/>
    <property type="project" value="UniProtKB-UniRule"/>
</dbReference>
<dbReference type="GO" id="GO:0000049">
    <property type="term" value="F:tRNA binding"/>
    <property type="evidence" value="ECO:0007669"/>
    <property type="project" value="InterPro"/>
</dbReference>
<dbReference type="GO" id="GO:0006432">
    <property type="term" value="P:phenylalanyl-tRNA aminoacylation"/>
    <property type="evidence" value="ECO:0007669"/>
    <property type="project" value="UniProtKB-UniRule"/>
</dbReference>
<dbReference type="CDD" id="cd00496">
    <property type="entry name" value="PheRS_alpha_core"/>
    <property type="match status" value="1"/>
</dbReference>
<dbReference type="Gene3D" id="3.30.930.10">
    <property type="entry name" value="Bira Bifunctional Protein, Domain 2"/>
    <property type="match status" value="1"/>
</dbReference>
<dbReference type="HAMAP" id="MF_00281">
    <property type="entry name" value="Phe_tRNA_synth_alpha1"/>
    <property type="match status" value="1"/>
</dbReference>
<dbReference type="InterPro" id="IPR006195">
    <property type="entry name" value="aa-tRNA-synth_II"/>
</dbReference>
<dbReference type="InterPro" id="IPR045864">
    <property type="entry name" value="aa-tRNA-synth_II/BPL/LPL"/>
</dbReference>
<dbReference type="InterPro" id="IPR004529">
    <property type="entry name" value="Phe-tRNA-synth_IIc_asu"/>
</dbReference>
<dbReference type="InterPro" id="IPR004188">
    <property type="entry name" value="Phe-tRNA_ligase_II_N"/>
</dbReference>
<dbReference type="InterPro" id="IPR022911">
    <property type="entry name" value="Phe_tRNA_ligase_alpha1_bac"/>
</dbReference>
<dbReference type="InterPro" id="IPR002319">
    <property type="entry name" value="Phenylalanyl-tRNA_Synthase"/>
</dbReference>
<dbReference type="InterPro" id="IPR010978">
    <property type="entry name" value="tRNA-bd_arm"/>
</dbReference>
<dbReference type="NCBIfam" id="TIGR00468">
    <property type="entry name" value="pheS"/>
    <property type="match status" value="1"/>
</dbReference>
<dbReference type="PANTHER" id="PTHR11538:SF41">
    <property type="entry name" value="PHENYLALANINE--TRNA LIGASE, MITOCHONDRIAL"/>
    <property type="match status" value="1"/>
</dbReference>
<dbReference type="PANTHER" id="PTHR11538">
    <property type="entry name" value="PHENYLALANYL-TRNA SYNTHETASE"/>
    <property type="match status" value="1"/>
</dbReference>
<dbReference type="Pfam" id="PF02912">
    <property type="entry name" value="Phe_tRNA-synt_N"/>
    <property type="match status" value="1"/>
</dbReference>
<dbReference type="Pfam" id="PF01409">
    <property type="entry name" value="tRNA-synt_2d"/>
    <property type="match status" value="1"/>
</dbReference>
<dbReference type="SUPFAM" id="SSF55681">
    <property type="entry name" value="Class II aaRS and biotin synthetases"/>
    <property type="match status" value="1"/>
</dbReference>
<dbReference type="SUPFAM" id="SSF46589">
    <property type="entry name" value="tRNA-binding arm"/>
    <property type="match status" value="1"/>
</dbReference>
<dbReference type="PROSITE" id="PS50862">
    <property type="entry name" value="AA_TRNA_LIGASE_II"/>
    <property type="match status" value="1"/>
</dbReference>
<keyword id="KW-0030">Aminoacyl-tRNA synthetase</keyword>
<keyword id="KW-0067">ATP-binding</keyword>
<keyword id="KW-0963">Cytoplasm</keyword>
<keyword id="KW-0436">Ligase</keyword>
<keyword id="KW-0460">Magnesium</keyword>
<keyword id="KW-0479">Metal-binding</keyword>
<keyword id="KW-0547">Nucleotide-binding</keyword>
<keyword id="KW-0648">Protein biosynthesis</keyword>
<gene>
    <name evidence="1" type="primary">pheS</name>
    <name type="ordered locus">ERGA_CDS_01280</name>
</gene>
<comment type="catalytic activity">
    <reaction evidence="1">
        <text>tRNA(Phe) + L-phenylalanine + ATP = L-phenylalanyl-tRNA(Phe) + AMP + diphosphate + H(+)</text>
        <dbReference type="Rhea" id="RHEA:19413"/>
        <dbReference type="Rhea" id="RHEA-COMP:9668"/>
        <dbReference type="Rhea" id="RHEA-COMP:9699"/>
        <dbReference type="ChEBI" id="CHEBI:15378"/>
        <dbReference type="ChEBI" id="CHEBI:30616"/>
        <dbReference type="ChEBI" id="CHEBI:33019"/>
        <dbReference type="ChEBI" id="CHEBI:58095"/>
        <dbReference type="ChEBI" id="CHEBI:78442"/>
        <dbReference type="ChEBI" id="CHEBI:78531"/>
        <dbReference type="ChEBI" id="CHEBI:456215"/>
        <dbReference type="EC" id="6.1.1.20"/>
    </reaction>
</comment>
<comment type="cofactor">
    <cofactor evidence="1">
        <name>Mg(2+)</name>
        <dbReference type="ChEBI" id="CHEBI:18420"/>
    </cofactor>
    <text evidence="1">Binds 2 magnesium ions per tetramer.</text>
</comment>
<comment type="subunit">
    <text evidence="1">Tetramer of two alpha and two beta subunits.</text>
</comment>
<comment type="subcellular location">
    <subcellularLocation>
        <location evidence="1">Cytoplasm</location>
    </subcellularLocation>
</comment>
<comment type="similarity">
    <text evidence="1">Belongs to the class-II aminoacyl-tRNA synthetase family. Phe-tRNA synthetase alpha subunit type 1 subfamily.</text>
</comment>
<protein>
    <recommendedName>
        <fullName evidence="1">Phenylalanine--tRNA ligase alpha subunit</fullName>
        <ecNumber evidence="1">6.1.1.20</ecNumber>
    </recommendedName>
    <alternativeName>
        <fullName evidence="1">Phenylalanyl-tRNA synthetase alpha subunit</fullName>
        <shortName evidence="1">PheRS</shortName>
    </alternativeName>
</protein>
<evidence type="ECO:0000255" key="1">
    <source>
        <dbReference type="HAMAP-Rule" id="MF_00281"/>
    </source>
</evidence>
<feature type="chain" id="PRO_0000231982" description="Phenylalanine--tRNA ligase alpha subunit">
    <location>
        <begin position="1"/>
        <end position="344"/>
    </location>
</feature>
<feature type="binding site" evidence="1">
    <location>
        <position position="261"/>
    </location>
    <ligand>
        <name>Mg(2+)</name>
        <dbReference type="ChEBI" id="CHEBI:18420"/>
        <note>shared with beta subunit</note>
    </ligand>
</feature>
<organism>
    <name type="scientific">Ehrlichia ruminantium (strain Gardel)</name>
    <dbReference type="NCBI Taxonomy" id="302409"/>
    <lineage>
        <taxon>Bacteria</taxon>
        <taxon>Pseudomonadati</taxon>
        <taxon>Pseudomonadota</taxon>
        <taxon>Alphaproteobacteria</taxon>
        <taxon>Rickettsiales</taxon>
        <taxon>Anaplasmataceae</taxon>
        <taxon>Ehrlichia</taxon>
    </lineage>
</organism>